<comment type="function">
    <text evidence="1">Catalyzes the hydrolytic deamination of adenine to hypoxanthine. Plays an important role in the purine salvage pathway and in nitrogen catabolism.</text>
</comment>
<comment type="catalytic activity">
    <reaction evidence="1">
        <text>adenine + H2O + H(+) = hypoxanthine + NH4(+)</text>
        <dbReference type="Rhea" id="RHEA:23688"/>
        <dbReference type="ChEBI" id="CHEBI:15377"/>
        <dbReference type="ChEBI" id="CHEBI:15378"/>
        <dbReference type="ChEBI" id="CHEBI:16708"/>
        <dbReference type="ChEBI" id="CHEBI:17368"/>
        <dbReference type="ChEBI" id="CHEBI:28938"/>
        <dbReference type="EC" id="3.5.4.2"/>
    </reaction>
</comment>
<comment type="cofactor">
    <cofactor evidence="1">
        <name>Zn(2+)</name>
        <dbReference type="ChEBI" id="CHEBI:29105"/>
    </cofactor>
    <text evidence="1">Binds 1 zinc ion per subunit.</text>
</comment>
<comment type="similarity">
    <text evidence="1">Belongs to the metallo-dependent hydrolases superfamily. Adenosine and AMP deaminases family. Adenine deaminase type 2 subfamily.</text>
</comment>
<proteinExistence type="inferred from homology"/>
<dbReference type="EC" id="3.5.4.2" evidence="1"/>
<dbReference type="EMBL" id="CP000352">
    <property type="protein sequence ID" value="ABF07776.1"/>
    <property type="molecule type" value="Genomic_DNA"/>
</dbReference>
<dbReference type="RefSeq" id="WP_011515716.1">
    <property type="nucleotide sequence ID" value="NC_007973.1"/>
</dbReference>
<dbReference type="SMR" id="Q1LQ00"/>
<dbReference type="STRING" id="266264.Rmet_0890"/>
<dbReference type="KEGG" id="rme:Rmet_0890"/>
<dbReference type="eggNOG" id="COG1816">
    <property type="taxonomic scope" value="Bacteria"/>
</dbReference>
<dbReference type="HOGENOM" id="CLU_039228_7_0_4"/>
<dbReference type="Proteomes" id="UP000002429">
    <property type="component" value="Chromosome"/>
</dbReference>
<dbReference type="GO" id="GO:0005829">
    <property type="term" value="C:cytosol"/>
    <property type="evidence" value="ECO:0007669"/>
    <property type="project" value="TreeGrafter"/>
</dbReference>
<dbReference type="GO" id="GO:0000034">
    <property type="term" value="F:adenine deaminase activity"/>
    <property type="evidence" value="ECO:0007669"/>
    <property type="project" value="UniProtKB-UniRule"/>
</dbReference>
<dbReference type="GO" id="GO:0008270">
    <property type="term" value="F:zinc ion binding"/>
    <property type="evidence" value="ECO:0007669"/>
    <property type="project" value="UniProtKB-UniRule"/>
</dbReference>
<dbReference type="GO" id="GO:0006146">
    <property type="term" value="P:adenine catabolic process"/>
    <property type="evidence" value="ECO:0007669"/>
    <property type="project" value="UniProtKB-UniRule"/>
</dbReference>
<dbReference type="GO" id="GO:0043103">
    <property type="term" value="P:hypoxanthine salvage"/>
    <property type="evidence" value="ECO:0007669"/>
    <property type="project" value="UniProtKB-UniRule"/>
</dbReference>
<dbReference type="GO" id="GO:0009117">
    <property type="term" value="P:nucleotide metabolic process"/>
    <property type="evidence" value="ECO:0007669"/>
    <property type="project" value="UniProtKB-KW"/>
</dbReference>
<dbReference type="CDD" id="cd01320">
    <property type="entry name" value="ADA"/>
    <property type="match status" value="1"/>
</dbReference>
<dbReference type="FunFam" id="3.20.20.140:FF:000039">
    <property type="entry name" value="Adenine deaminase"/>
    <property type="match status" value="1"/>
</dbReference>
<dbReference type="Gene3D" id="3.20.20.140">
    <property type="entry name" value="Metal-dependent hydrolases"/>
    <property type="match status" value="1"/>
</dbReference>
<dbReference type="HAMAP" id="MF_01962">
    <property type="entry name" value="Adenine_deaminase"/>
    <property type="match status" value="1"/>
</dbReference>
<dbReference type="InterPro" id="IPR001365">
    <property type="entry name" value="A_deaminase_dom"/>
</dbReference>
<dbReference type="InterPro" id="IPR028892">
    <property type="entry name" value="ADE"/>
</dbReference>
<dbReference type="InterPro" id="IPR006330">
    <property type="entry name" value="Ado/ade_deaminase"/>
</dbReference>
<dbReference type="InterPro" id="IPR032466">
    <property type="entry name" value="Metal_Hydrolase"/>
</dbReference>
<dbReference type="NCBIfam" id="TIGR01430">
    <property type="entry name" value="aden_deam"/>
    <property type="match status" value="1"/>
</dbReference>
<dbReference type="NCBIfam" id="NF006850">
    <property type="entry name" value="PRK09358.1-6"/>
    <property type="match status" value="1"/>
</dbReference>
<dbReference type="PANTHER" id="PTHR43114">
    <property type="entry name" value="ADENINE DEAMINASE"/>
    <property type="match status" value="1"/>
</dbReference>
<dbReference type="PANTHER" id="PTHR43114:SF6">
    <property type="entry name" value="ADENINE DEAMINASE"/>
    <property type="match status" value="1"/>
</dbReference>
<dbReference type="Pfam" id="PF00962">
    <property type="entry name" value="A_deaminase"/>
    <property type="match status" value="1"/>
</dbReference>
<dbReference type="SUPFAM" id="SSF51556">
    <property type="entry name" value="Metallo-dependent hydrolases"/>
    <property type="match status" value="1"/>
</dbReference>
<protein>
    <recommendedName>
        <fullName evidence="1">Adenine deaminase</fullName>
        <shortName evidence="1">ADE</shortName>
        <ecNumber evidence="1">3.5.4.2</ecNumber>
    </recommendedName>
    <alternativeName>
        <fullName evidence="1">Adenine aminohydrolase</fullName>
        <shortName evidence="1">AAH</shortName>
    </alternativeName>
</protein>
<gene>
    <name type="ordered locus">Rmet_0890</name>
</gene>
<accession>Q1LQ00</accession>
<reference key="1">
    <citation type="journal article" date="2010" name="PLoS ONE">
        <title>The complete genome sequence of Cupriavidus metallidurans strain CH34, a master survivalist in harsh and anthropogenic environments.</title>
        <authorList>
            <person name="Janssen P.J."/>
            <person name="Van Houdt R."/>
            <person name="Moors H."/>
            <person name="Monsieurs P."/>
            <person name="Morin N."/>
            <person name="Michaux A."/>
            <person name="Benotmane M.A."/>
            <person name="Leys N."/>
            <person name="Vallaeys T."/>
            <person name="Lapidus A."/>
            <person name="Monchy S."/>
            <person name="Medigue C."/>
            <person name="Taghavi S."/>
            <person name="McCorkle S."/>
            <person name="Dunn J."/>
            <person name="van der Lelie D."/>
            <person name="Mergeay M."/>
        </authorList>
    </citation>
    <scope>NUCLEOTIDE SEQUENCE [LARGE SCALE GENOMIC DNA]</scope>
    <source>
        <strain>ATCC 43123 / DSM 2839 / NBRC 102507 / CH34</strain>
    </source>
</reference>
<sequence length="354" mass="39234">MTIDAALADKIRRTPKAELHVHIEGTLEPERIFRLAQRNNVKLAYPDVEALRAAYAFTDLQSFLDIYYAGASVLLTEEDFFDMTMDYVKRAAADNVRHAEIFFDPQTHTARGVPMGTVIDGIADALAQARTEYDFSSSMILCFLRHLSEEDALATLEAALPYRDRFVGVGLDSSERGNPPEKFARVFARAKELGLHLVAHAGEEGPPQYVTDALDILKVERIDHGVRAIEDEALVQRLARERVALTVCPLSNQKLMVHPDLRDHPMKRLLDAGVAVTLHSDDPAYFGGYMNANWEASFDALPLDAADAHKLARNSFEAAFLPDVQKAEFLAEVDHFWSATPASPPATANVTTTT</sequence>
<keyword id="KW-0378">Hydrolase</keyword>
<keyword id="KW-0479">Metal-binding</keyword>
<keyword id="KW-0546">Nucleotide metabolism</keyword>
<keyword id="KW-1185">Reference proteome</keyword>
<keyword id="KW-0862">Zinc</keyword>
<evidence type="ECO:0000255" key="1">
    <source>
        <dbReference type="HAMAP-Rule" id="MF_01962"/>
    </source>
</evidence>
<name>ADE_CUPMC</name>
<organism>
    <name type="scientific">Cupriavidus metallidurans (strain ATCC 43123 / DSM 2839 / NBRC 102507 / CH34)</name>
    <name type="common">Ralstonia metallidurans</name>
    <dbReference type="NCBI Taxonomy" id="266264"/>
    <lineage>
        <taxon>Bacteria</taxon>
        <taxon>Pseudomonadati</taxon>
        <taxon>Pseudomonadota</taxon>
        <taxon>Betaproteobacteria</taxon>
        <taxon>Burkholderiales</taxon>
        <taxon>Burkholderiaceae</taxon>
        <taxon>Cupriavidus</taxon>
    </lineage>
</organism>
<feature type="chain" id="PRO_1000017689" description="Adenine deaminase">
    <location>
        <begin position="1"/>
        <end position="354"/>
    </location>
</feature>
<feature type="active site" description="Proton donor" evidence="1">
    <location>
        <position position="203"/>
    </location>
</feature>
<feature type="binding site" evidence="1">
    <location>
        <position position="20"/>
    </location>
    <ligand>
        <name>Zn(2+)</name>
        <dbReference type="ChEBI" id="CHEBI:29105"/>
        <note>catalytic</note>
    </ligand>
</feature>
<feature type="binding site" evidence="1">
    <location>
        <position position="22"/>
    </location>
    <ligand>
        <name>Zn(2+)</name>
        <dbReference type="ChEBI" id="CHEBI:29105"/>
        <note>catalytic</note>
    </ligand>
</feature>
<feature type="binding site" evidence="1">
    <location>
        <position position="200"/>
    </location>
    <ligand>
        <name>Zn(2+)</name>
        <dbReference type="ChEBI" id="CHEBI:29105"/>
        <note>catalytic</note>
    </ligand>
</feature>
<feature type="binding site" evidence="1">
    <location>
        <position position="281"/>
    </location>
    <ligand>
        <name>Zn(2+)</name>
        <dbReference type="ChEBI" id="CHEBI:29105"/>
        <note>catalytic</note>
    </ligand>
</feature>
<feature type="binding site" evidence="1">
    <location>
        <position position="282"/>
    </location>
    <ligand>
        <name>substrate</name>
    </ligand>
</feature>
<feature type="site" description="Important for catalytic activity" evidence="1">
    <location>
        <position position="224"/>
    </location>
</feature>